<protein>
    <recommendedName>
        <fullName>Uncharacterized protein ORF38</fullName>
    </recommendedName>
</protein>
<reference key="1">
    <citation type="journal article" date="2005" name="Nature">
        <title>Virology: independent virus development outside a host.</title>
        <authorList>
            <person name="Haring M."/>
            <person name="Vestergaard G."/>
            <person name="Rachel R."/>
            <person name="Chen L."/>
            <person name="Garrett R.A."/>
            <person name="Prangishvili D."/>
        </authorList>
    </citation>
    <scope>NUCLEOTIDE SEQUENCE [GENOMIC DNA]</scope>
</reference>
<keyword id="KW-1185">Reference proteome</keyword>
<organism>
    <name type="scientific">Acidianus two-tailed virus</name>
    <name type="common">ATV</name>
    <dbReference type="NCBI Taxonomy" id="315953"/>
    <lineage>
        <taxon>Viruses</taxon>
        <taxon>Viruses incertae sedis</taxon>
        <taxon>Bicaudaviridae</taxon>
        <taxon>Bicaudavirus</taxon>
    </lineage>
</organism>
<organismHost>
    <name type="scientific">Acidianus convivator</name>
    <dbReference type="NCBI Taxonomy" id="269667"/>
</organismHost>
<proteinExistence type="predicted"/>
<sequence length="38" mass="4495">MFKTVQKEPIPLTENFSKFSPLEAKSCWWGFIILFLAF</sequence>
<name>Y038_ATV</name>
<accession>Q3V4R4</accession>
<dbReference type="EMBL" id="AJ888457">
    <property type="protein sequence ID" value="CAI59900.1"/>
    <property type="molecule type" value="Genomic_DNA"/>
</dbReference>
<dbReference type="RefSeq" id="YP_319877.1">
    <property type="nucleotide sequence ID" value="NC_007409.1"/>
</dbReference>
<dbReference type="SMR" id="Q3V4R4"/>
<dbReference type="GeneID" id="4484256"/>
<dbReference type="KEGG" id="vg:4484256"/>
<dbReference type="Proteomes" id="UP000002150">
    <property type="component" value="Genome"/>
</dbReference>
<feature type="chain" id="PRO_0000389086" description="Uncharacterized protein ORF38">
    <location>
        <begin position="1"/>
        <end position="38"/>
    </location>
</feature>